<dbReference type="EC" id="5.2.1.8" evidence="1"/>
<dbReference type="EMBL" id="CP000518">
    <property type="protein sequence ID" value="ABL92846.1"/>
    <property type="molecule type" value="Genomic_DNA"/>
</dbReference>
<dbReference type="SMR" id="A1UJ38"/>
<dbReference type="STRING" id="189918.Mkms_3652"/>
<dbReference type="KEGG" id="mkm:Mkms_3652"/>
<dbReference type="HOGENOM" id="CLU_033058_3_0_11"/>
<dbReference type="OrthoDB" id="9767721at2"/>
<dbReference type="GO" id="GO:0005737">
    <property type="term" value="C:cytoplasm"/>
    <property type="evidence" value="ECO:0007669"/>
    <property type="project" value="UniProtKB-SubCell"/>
</dbReference>
<dbReference type="GO" id="GO:0003755">
    <property type="term" value="F:peptidyl-prolyl cis-trans isomerase activity"/>
    <property type="evidence" value="ECO:0007669"/>
    <property type="project" value="UniProtKB-UniRule"/>
</dbReference>
<dbReference type="GO" id="GO:0044183">
    <property type="term" value="F:protein folding chaperone"/>
    <property type="evidence" value="ECO:0007669"/>
    <property type="project" value="TreeGrafter"/>
</dbReference>
<dbReference type="GO" id="GO:0043022">
    <property type="term" value="F:ribosome binding"/>
    <property type="evidence" value="ECO:0007669"/>
    <property type="project" value="TreeGrafter"/>
</dbReference>
<dbReference type="GO" id="GO:0051083">
    <property type="term" value="P:'de novo' cotranslational protein folding"/>
    <property type="evidence" value="ECO:0007669"/>
    <property type="project" value="TreeGrafter"/>
</dbReference>
<dbReference type="GO" id="GO:0051301">
    <property type="term" value="P:cell division"/>
    <property type="evidence" value="ECO:0007669"/>
    <property type="project" value="UniProtKB-KW"/>
</dbReference>
<dbReference type="GO" id="GO:0061077">
    <property type="term" value="P:chaperone-mediated protein folding"/>
    <property type="evidence" value="ECO:0007669"/>
    <property type="project" value="TreeGrafter"/>
</dbReference>
<dbReference type="GO" id="GO:0015031">
    <property type="term" value="P:protein transport"/>
    <property type="evidence" value="ECO:0007669"/>
    <property type="project" value="UniProtKB-UniRule"/>
</dbReference>
<dbReference type="GO" id="GO:0043335">
    <property type="term" value="P:protein unfolding"/>
    <property type="evidence" value="ECO:0007669"/>
    <property type="project" value="TreeGrafter"/>
</dbReference>
<dbReference type="FunFam" id="3.10.50.40:FF:000019">
    <property type="entry name" value="Trigger factor"/>
    <property type="match status" value="1"/>
</dbReference>
<dbReference type="Gene3D" id="3.10.50.40">
    <property type="match status" value="1"/>
</dbReference>
<dbReference type="Gene3D" id="3.30.70.1050">
    <property type="entry name" value="Trigger factor ribosome-binding domain"/>
    <property type="match status" value="1"/>
</dbReference>
<dbReference type="Gene3D" id="1.10.3120.10">
    <property type="entry name" value="Trigger factor, C-terminal domain"/>
    <property type="match status" value="1"/>
</dbReference>
<dbReference type="HAMAP" id="MF_00303">
    <property type="entry name" value="Trigger_factor_Tig"/>
    <property type="match status" value="1"/>
</dbReference>
<dbReference type="InterPro" id="IPR046357">
    <property type="entry name" value="PPIase_dom_sf"/>
</dbReference>
<dbReference type="InterPro" id="IPR001179">
    <property type="entry name" value="PPIase_FKBP_dom"/>
</dbReference>
<dbReference type="InterPro" id="IPR005215">
    <property type="entry name" value="Trig_fac"/>
</dbReference>
<dbReference type="InterPro" id="IPR008880">
    <property type="entry name" value="Trigger_fac_C"/>
</dbReference>
<dbReference type="InterPro" id="IPR037041">
    <property type="entry name" value="Trigger_fac_C_sf"/>
</dbReference>
<dbReference type="InterPro" id="IPR008881">
    <property type="entry name" value="Trigger_fac_ribosome-bd_bac"/>
</dbReference>
<dbReference type="InterPro" id="IPR036611">
    <property type="entry name" value="Trigger_fac_ribosome-bd_sf"/>
</dbReference>
<dbReference type="InterPro" id="IPR027304">
    <property type="entry name" value="Trigger_fact/SurA_dom_sf"/>
</dbReference>
<dbReference type="NCBIfam" id="TIGR00115">
    <property type="entry name" value="tig"/>
    <property type="match status" value="1"/>
</dbReference>
<dbReference type="PANTHER" id="PTHR30560">
    <property type="entry name" value="TRIGGER FACTOR CHAPERONE AND PEPTIDYL-PROLYL CIS/TRANS ISOMERASE"/>
    <property type="match status" value="1"/>
</dbReference>
<dbReference type="PANTHER" id="PTHR30560:SF3">
    <property type="entry name" value="TRIGGER FACTOR-LIKE PROTEIN TIG, CHLOROPLASTIC"/>
    <property type="match status" value="1"/>
</dbReference>
<dbReference type="Pfam" id="PF00254">
    <property type="entry name" value="FKBP_C"/>
    <property type="match status" value="1"/>
</dbReference>
<dbReference type="Pfam" id="PF05698">
    <property type="entry name" value="Trigger_C"/>
    <property type="match status" value="1"/>
</dbReference>
<dbReference type="Pfam" id="PF05697">
    <property type="entry name" value="Trigger_N"/>
    <property type="match status" value="1"/>
</dbReference>
<dbReference type="PIRSF" id="PIRSF003095">
    <property type="entry name" value="Trigger_factor"/>
    <property type="match status" value="1"/>
</dbReference>
<dbReference type="SUPFAM" id="SSF54534">
    <property type="entry name" value="FKBP-like"/>
    <property type="match status" value="1"/>
</dbReference>
<dbReference type="SUPFAM" id="SSF109998">
    <property type="entry name" value="Triger factor/SurA peptide-binding domain-like"/>
    <property type="match status" value="1"/>
</dbReference>
<dbReference type="SUPFAM" id="SSF102735">
    <property type="entry name" value="Trigger factor ribosome-binding domain"/>
    <property type="match status" value="1"/>
</dbReference>
<dbReference type="PROSITE" id="PS50059">
    <property type="entry name" value="FKBP_PPIASE"/>
    <property type="match status" value="1"/>
</dbReference>
<reference key="1">
    <citation type="submission" date="2006-12" db="EMBL/GenBank/DDBJ databases">
        <title>Complete sequence of chromosome of Mycobacterium sp. KMS.</title>
        <authorList>
            <consortium name="US DOE Joint Genome Institute"/>
            <person name="Copeland A."/>
            <person name="Lucas S."/>
            <person name="Lapidus A."/>
            <person name="Barry K."/>
            <person name="Detter J.C."/>
            <person name="Glavina del Rio T."/>
            <person name="Hammon N."/>
            <person name="Israni S."/>
            <person name="Dalin E."/>
            <person name="Tice H."/>
            <person name="Pitluck S."/>
            <person name="Kiss H."/>
            <person name="Brettin T."/>
            <person name="Bruce D."/>
            <person name="Han C."/>
            <person name="Tapia R."/>
            <person name="Gilna P."/>
            <person name="Schmutz J."/>
            <person name="Larimer F."/>
            <person name="Land M."/>
            <person name="Hauser L."/>
            <person name="Kyrpides N."/>
            <person name="Mikhailova N."/>
            <person name="Miller C.D."/>
            <person name="Richardson P."/>
        </authorList>
    </citation>
    <scope>NUCLEOTIDE SEQUENCE [LARGE SCALE GENOMIC DNA]</scope>
    <source>
        <strain>KMS</strain>
    </source>
</reference>
<feature type="chain" id="PRO_1000022713" description="Trigger factor">
    <location>
        <begin position="1"/>
        <end position="478"/>
    </location>
</feature>
<feature type="domain" description="PPIase FKBP-type" evidence="1">
    <location>
        <begin position="162"/>
        <end position="243"/>
    </location>
</feature>
<feature type="region of interest" description="Disordered" evidence="2">
    <location>
        <begin position="424"/>
        <end position="478"/>
    </location>
</feature>
<feature type="compositionally biased region" description="Acidic residues" evidence="2">
    <location>
        <begin position="448"/>
        <end position="478"/>
    </location>
</feature>
<proteinExistence type="inferred from homology"/>
<comment type="function">
    <text evidence="1">Involved in protein export. Acts as a chaperone by maintaining the newly synthesized protein in an open conformation. Functions as a peptidyl-prolyl cis-trans isomerase.</text>
</comment>
<comment type="catalytic activity">
    <reaction evidence="1">
        <text>[protein]-peptidylproline (omega=180) = [protein]-peptidylproline (omega=0)</text>
        <dbReference type="Rhea" id="RHEA:16237"/>
        <dbReference type="Rhea" id="RHEA-COMP:10747"/>
        <dbReference type="Rhea" id="RHEA-COMP:10748"/>
        <dbReference type="ChEBI" id="CHEBI:83833"/>
        <dbReference type="ChEBI" id="CHEBI:83834"/>
        <dbReference type="EC" id="5.2.1.8"/>
    </reaction>
</comment>
<comment type="subcellular location">
    <subcellularLocation>
        <location>Cytoplasm</location>
    </subcellularLocation>
    <text evidence="1">About half TF is bound to the ribosome near the polypeptide exit tunnel while the other half is free in the cytoplasm.</text>
</comment>
<comment type="domain">
    <text evidence="1">Consists of 3 domains; the N-terminus binds the ribosome, the middle domain has PPIase activity, while the C-terminus has intrinsic chaperone activity on its own.</text>
</comment>
<comment type="similarity">
    <text evidence="1">Belongs to the FKBP-type PPIase family. Tig subfamily.</text>
</comment>
<evidence type="ECO:0000255" key="1">
    <source>
        <dbReference type="HAMAP-Rule" id="MF_00303"/>
    </source>
</evidence>
<evidence type="ECO:0000256" key="2">
    <source>
        <dbReference type="SAM" id="MobiDB-lite"/>
    </source>
</evidence>
<gene>
    <name evidence="1" type="primary">tig</name>
    <name type="ordered locus">Mkms_3652</name>
</gene>
<name>TIG_MYCSK</name>
<organism>
    <name type="scientific">Mycobacterium sp. (strain KMS)</name>
    <dbReference type="NCBI Taxonomy" id="189918"/>
    <lineage>
        <taxon>Bacteria</taxon>
        <taxon>Bacillati</taxon>
        <taxon>Actinomycetota</taxon>
        <taxon>Actinomycetes</taxon>
        <taxon>Mycobacteriales</taxon>
        <taxon>Mycobacteriaceae</taxon>
        <taxon>Mycobacterium</taxon>
    </lineage>
</organism>
<accession>A1UJ38</accession>
<keyword id="KW-0131">Cell cycle</keyword>
<keyword id="KW-0132">Cell division</keyword>
<keyword id="KW-0143">Chaperone</keyword>
<keyword id="KW-0963">Cytoplasm</keyword>
<keyword id="KW-0413">Isomerase</keyword>
<keyword id="KW-0697">Rotamase</keyword>
<protein>
    <recommendedName>
        <fullName evidence="1">Trigger factor</fullName>
        <shortName evidence="1">TF</shortName>
        <ecNumber evidence="1">5.2.1.8</ecNumber>
    </recommendedName>
    <alternativeName>
        <fullName evidence="1">PPIase</fullName>
    </alternativeName>
</protein>
<sequence>MKSTVEKLSPTRVRINVEVPFTELEPDFDRAFKELAKQVRLPGFRPGKAPRKLLEARVGREAMLDQVVGEAVPGRYTEAVTSSDVQPLGQPEIEITKKEYGEDLVFTAEVDVRPEITLPDLSALEITVDPIEITDEEVDTELQSLRARFGTLTGVDRPAKDGDFVSIDLSATVDGKDVPEATTEGLSHEVGSGQLIEGLDDAIVGLSEGESKEFTTTLAAGEHAGKEAIVTVTVKSIKERELPEPDDEFAQLASEFDTIDELKESLTEQVRRVKRVQQAEQIRDKALELLLEQTEVPLPEKIVQAQIDDTVHNAIHGLDHDEDRFAEQLAEQGSSREEFDANTRTEAEKAVKTQLLMDALADQLEVQVGQGDLTERLVLMSRQYGLEPQQLLQILQQNNQLPAMFADVRRGLTIAAVVHGATVKDTDGNDIDTTEFFGPSGGAQAEAEGADEADADSDADSDTEADSDTEADEADEAK</sequence>